<accession>A7HZL0</accession>
<proteinExistence type="inferred from homology"/>
<name>RS19_CAMHC</name>
<dbReference type="EMBL" id="CP000776">
    <property type="protein sequence ID" value="ABS52136.1"/>
    <property type="molecule type" value="Genomic_DNA"/>
</dbReference>
<dbReference type="RefSeq" id="WP_011991548.1">
    <property type="nucleotide sequence ID" value="NC_009714.1"/>
</dbReference>
<dbReference type="SMR" id="A7HZL0"/>
<dbReference type="STRING" id="360107.CHAB381_0088"/>
<dbReference type="KEGG" id="cha:CHAB381_0088"/>
<dbReference type="eggNOG" id="COG0185">
    <property type="taxonomic scope" value="Bacteria"/>
</dbReference>
<dbReference type="HOGENOM" id="CLU_144911_0_1_7"/>
<dbReference type="OrthoDB" id="9797833at2"/>
<dbReference type="Proteomes" id="UP000002407">
    <property type="component" value="Chromosome"/>
</dbReference>
<dbReference type="GO" id="GO:0005737">
    <property type="term" value="C:cytoplasm"/>
    <property type="evidence" value="ECO:0007669"/>
    <property type="project" value="UniProtKB-ARBA"/>
</dbReference>
<dbReference type="GO" id="GO:0015935">
    <property type="term" value="C:small ribosomal subunit"/>
    <property type="evidence" value="ECO:0007669"/>
    <property type="project" value="InterPro"/>
</dbReference>
<dbReference type="GO" id="GO:0019843">
    <property type="term" value="F:rRNA binding"/>
    <property type="evidence" value="ECO:0007669"/>
    <property type="project" value="UniProtKB-UniRule"/>
</dbReference>
<dbReference type="GO" id="GO:0003735">
    <property type="term" value="F:structural constituent of ribosome"/>
    <property type="evidence" value="ECO:0007669"/>
    <property type="project" value="InterPro"/>
</dbReference>
<dbReference type="GO" id="GO:0000028">
    <property type="term" value="P:ribosomal small subunit assembly"/>
    <property type="evidence" value="ECO:0007669"/>
    <property type="project" value="TreeGrafter"/>
</dbReference>
<dbReference type="GO" id="GO:0006412">
    <property type="term" value="P:translation"/>
    <property type="evidence" value="ECO:0007669"/>
    <property type="project" value="UniProtKB-UniRule"/>
</dbReference>
<dbReference type="FunFam" id="3.30.860.10:FF:000001">
    <property type="entry name" value="30S ribosomal protein S19"/>
    <property type="match status" value="1"/>
</dbReference>
<dbReference type="Gene3D" id="3.30.860.10">
    <property type="entry name" value="30s Ribosomal Protein S19, Chain A"/>
    <property type="match status" value="1"/>
</dbReference>
<dbReference type="HAMAP" id="MF_00531">
    <property type="entry name" value="Ribosomal_uS19"/>
    <property type="match status" value="1"/>
</dbReference>
<dbReference type="InterPro" id="IPR002222">
    <property type="entry name" value="Ribosomal_uS19"/>
</dbReference>
<dbReference type="InterPro" id="IPR005732">
    <property type="entry name" value="Ribosomal_uS19_bac-type"/>
</dbReference>
<dbReference type="InterPro" id="IPR020934">
    <property type="entry name" value="Ribosomal_uS19_CS"/>
</dbReference>
<dbReference type="InterPro" id="IPR023575">
    <property type="entry name" value="Ribosomal_uS19_SF"/>
</dbReference>
<dbReference type="NCBIfam" id="TIGR01050">
    <property type="entry name" value="rpsS_bact"/>
    <property type="match status" value="1"/>
</dbReference>
<dbReference type="PANTHER" id="PTHR11880">
    <property type="entry name" value="RIBOSOMAL PROTEIN S19P FAMILY MEMBER"/>
    <property type="match status" value="1"/>
</dbReference>
<dbReference type="PANTHER" id="PTHR11880:SF8">
    <property type="entry name" value="SMALL RIBOSOMAL SUBUNIT PROTEIN US19M"/>
    <property type="match status" value="1"/>
</dbReference>
<dbReference type="Pfam" id="PF00203">
    <property type="entry name" value="Ribosomal_S19"/>
    <property type="match status" value="1"/>
</dbReference>
<dbReference type="PIRSF" id="PIRSF002144">
    <property type="entry name" value="Ribosomal_S19"/>
    <property type="match status" value="1"/>
</dbReference>
<dbReference type="PRINTS" id="PR00975">
    <property type="entry name" value="RIBOSOMALS19"/>
</dbReference>
<dbReference type="SUPFAM" id="SSF54570">
    <property type="entry name" value="Ribosomal protein S19"/>
    <property type="match status" value="1"/>
</dbReference>
<dbReference type="PROSITE" id="PS00323">
    <property type="entry name" value="RIBOSOMAL_S19"/>
    <property type="match status" value="1"/>
</dbReference>
<gene>
    <name evidence="1" type="primary">rpsS</name>
    <name type="ordered locus">CHAB381_0088</name>
</gene>
<protein>
    <recommendedName>
        <fullName evidence="1">Small ribosomal subunit protein uS19</fullName>
    </recommendedName>
    <alternativeName>
        <fullName evidence="2">30S ribosomal protein S19</fullName>
    </alternativeName>
</protein>
<evidence type="ECO:0000255" key="1">
    <source>
        <dbReference type="HAMAP-Rule" id="MF_00531"/>
    </source>
</evidence>
<evidence type="ECO:0000305" key="2"/>
<reference key="1">
    <citation type="submission" date="2007-07" db="EMBL/GenBank/DDBJ databases">
        <title>Complete genome sequence of Campylobacter hominis ATCC BAA-381, a commensal isolated from the human gastrointestinal tract.</title>
        <authorList>
            <person name="Fouts D.E."/>
            <person name="Mongodin E.F."/>
            <person name="Puiu D."/>
            <person name="Sebastian Y."/>
            <person name="Miller W.G."/>
            <person name="Mandrell R.E."/>
            <person name="Nelson K.E."/>
        </authorList>
    </citation>
    <scope>NUCLEOTIDE SEQUENCE [LARGE SCALE GENOMIC DNA]</scope>
    <source>
        <strain>ATCC BAA-381 / DSM 21671 / CCUG 45161 / LMG 19568 / NCTC 13146 / CH001A</strain>
    </source>
</reference>
<organism>
    <name type="scientific">Campylobacter hominis (strain ATCC BAA-381 / DSM 21671 / CCUG 45161 / LMG 19568 / NCTC 13146 / CH001A)</name>
    <dbReference type="NCBI Taxonomy" id="360107"/>
    <lineage>
        <taxon>Bacteria</taxon>
        <taxon>Pseudomonadati</taxon>
        <taxon>Campylobacterota</taxon>
        <taxon>Epsilonproteobacteria</taxon>
        <taxon>Campylobacterales</taxon>
        <taxon>Campylobacteraceae</taxon>
        <taxon>Campylobacter</taxon>
    </lineage>
</organism>
<sequence>MARSLKKGPFVDEYIIKKVIAAKKAKDNKPIKTWSRRSTITPEMIGLTFNVHNGKSFIPVYVTEHHIGYKLGEFAPTRTFKGHRGSVQKKIGK</sequence>
<keyword id="KW-1185">Reference proteome</keyword>
<keyword id="KW-0687">Ribonucleoprotein</keyword>
<keyword id="KW-0689">Ribosomal protein</keyword>
<keyword id="KW-0694">RNA-binding</keyword>
<keyword id="KW-0699">rRNA-binding</keyword>
<comment type="function">
    <text evidence="1">Protein S19 forms a complex with S13 that binds strongly to the 16S ribosomal RNA.</text>
</comment>
<comment type="similarity">
    <text evidence="1">Belongs to the universal ribosomal protein uS19 family.</text>
</comment>
<feature type="chain" id="PRO_1000051031" description="Small ribosomal subunit protein uS19">
    <location>
        <begin position="1"/>
        <end position="93"/>
    </location>
</feature>